<name>SEPF_MYCUA</name>
<evidence type="ECO:0000255" key="1">
    <source>
        <dbReference type="HAMAP-Rule" id="MF_01197"/>
    </source>
</evidence>
<evidence type="ECO:0000256" key="2">
    <source>
        <dbReference type="SAM" id="MobiDB-lite"/>
    </source>
</evidence>
<accession>A0PTI1</accession>
<protein>
    <recommendedName>
        <fullName evidence="1">Cell division protein SepF</fullName>
    </recommendedName>
</protein>
<dbReference type="EMBL" id="CP000325">
    <property type="protein sequence ID" value="ABL05650.1"/>
    <property type="molecule type" value="Genomic_DNA"/>
</dbReference>
<dbReference type="RefSeq" id="WP_011741256.1">
    <property type="nucleotide sequence ID" value="NC_008611.1"/>
</dbReference>
<dbReference type="SMR" id="A0PTI1"/>
<dbReference type="GeneID" id="93437238"/>
<dbReference type="KEGG" id="mul:MUL_3495"/>
<dbReference type="eggNOG" id="COG1799">
    <property type="taxonomic scope" value="Bacteria"/>
</dbReference>
<dbReference type="HOGENOM" id="CLU_078499_0_0_11"/>
<dbReference type="Proteomes" id="UP000000765">
    <property type="component" value="Chromosome"/>
</dbReference>
<dbReference type="GO" id="GO:0005737">
    <property type="term" value="C:cytoplasm"/>
    <property type="evidence" value="ECO:0007669"/>
    <property type="project" value="UniProtKB-SubCell"/>
</dbReference>
<dbReference type="GO" id="GO:0000917">
    <property type="term" value="P:division septum assembly"/>
    <property type="evidence" value="ECO:0007669"/>
    <property type="project" value="UniProtKB-KW"/>
</dbReference>
<dbReference type="GO" id="GO:0043093">
    <property type="term" value="P:FtsZ-dependent cytokinesis"/>
    <property type="evidence" value="ECO:0007669"/>
    <property type="project" value="UniProtKB-UniRule"/>
</dbReference>
<dbReference type="FunFam" id="3.30.110.150:FF:000001">
    <property type="entry name" value="Cell division protein SepF"/>
    <property type="match status" value="1"/>
</dbReference>
<dbReference type="Gene3D" id="3.30.110.150">
    <property type="entry name" value="SepF-like protein"/>
    <property type="match status" value="1"/>
</dbReference>
<dbReference type="HAMAP" id="MF_01197">
    <property type="entry name" value="SepF"/>
    <property type="match status" value="1"/>
</dbReference>
<dbReference type="InterPro" id="IPR023052">
    <property type="entry name" value="Cell_div_SepF"/>
</dbReference>
<dbReference type="InterPro" id="IPR007561">
    <property type="entry name" value="Cell_div_SepF/SepF-rel"/>
</dbReference>
<dbReference type="InterPro" id="IPR038594">
    <property type="entry name" value="SepF-like_sf"/>
</dbReference>
<dbReference type="PANTHER" id="PTHR35798">
    <property type="entry name" value="CELL DIVISION PROTEIN SEPF"/>
    <property type="match status" value="1"/>
</dbReference>
<dbReference type="PANTHER" id="PTHR35798:SF1">
    <property type="entry name" value="CELL DIVISION PROTEIN SEPF"/>
    <property type="match status" value="1"/>
</dbReference>
<dbReference type="Pfam" id="PF04472">
    <property type="entry name" value="SepF"/>
    <property type="match status" value="1"/>
</dbReference>
<gene>
    <name evidence="1" type="primary">sepF</name>
    <name type="ordered locus">MUL_3495</name>
</gene>
<sequence>MSTLHKVKAYFGMAPMEDYDDEYYDDRGPSRGYSRPRFEDDYGRYEGRDFEDPRRDPRAGMRADLRGEPADYPPPGGYRGGYPDEARFQPREFDRADMARPRFGSWLRNPTRGSLAMDPRRMAMMFEEGHPLSKITTLRPKDYSEARTIGERFRDGTPVIMDLVSMDNADAKRLVDFAAGLAFALRGSFDKVATKVFLLSPADVDVTPEERRRIAETGFYAYQ</sequence>
<comment type="function">
    <text evidence="1">Cell division protein that is part of the divisome complex and is recruited early to the Z-ring. Probably stimulates Z-ring formation, perhaps through the cross-linking of FtsZ protofilaments. Its function overlaps with FtsA.</text>
</comment>
<comment type="subunit">
    <text evidence="1">Homodimer. Interacts with FtsZ.</text>
</comment>
<comment type="subcellular location">
    <subcellularLocation>
        <location evidence="1">Cytoplasm</location>
    </subcellularLocation>
    <text evidence="1">Localizes to the division site, in a FtsZ-dependent manner.</text>
</comment>
<comment type="similarity">
    <text evidence="1">Belongs to the SepF family.</text>
</comment>
<keyword id="KW-0131">Cell cycle</keyword>
<keyword id="KW-0132">Cell division</keyword>
<keyword id="KW-0963">Cytoplasm</keyword>
<keyword id="KW-0717">Septation</keyword>
<feature type="chain" id="PRO_0000334049" description="Cell division protein SepF">
    <location>
        <begin position="1"/>
        <end position="223"/>
    </location>
</feature>
<feature type="region of interest" description="Disordered" evidence="2">
    <location>
        <begin position="19"/>
        <end position="81"/>
    </location>
</feature>
<feature type="compositionally biased region" description="Basic and acidic residues" evidence="2">
    <location>
        <begin position="36"/>
        <end position="69"/>
    </location>
</feature>
<proteinExistence type="inferred from homology"/>
<organism>
    <name type="scientific">Mycobacterium ulcerans (strain Agy99)</name>
    <dbReference type="NCBI Taxonomy" id="362242"/>
    <lineage>
        <taxon>Bacteria</taxon>
        <taxon>Bacillati</taxon>
        <taxon>Actinomycetota</taxon>
        <taxon>Actinomycetes</taxon>
        <taxon>Mycobacteriales</taxon>
        <taxon>Mycobacteriaceae</taxon>
        <taxon>Mycobacterium</taxon>
        <taxon>Mycobacterium ulcerans group</taxon>
    </lineage>
</organism>
<reference key="1">
    <citation type="journal article" date="2007" name="Genome Res.">
        <title>Reductive evolution and niche adaptation inferred from the genome of Mycobacterium ulcerans, the causative agent of Buruli ulcer.</title>
        <authorList>
            <person name="Stinear T.P."/>
            <person name="Seemann T."/>
            <person name="Pidot S."/>
            <person name="Frigui W."/>
            <person name="Reysset G."/>
            <person name="Garnier T."/>
            <person name="Meurice G."/>
            <person name="Simon D."/>
            <person name="Bouchier C."/>
            <person name="Ma L."/>
            <person name="Tichit M."/>
            <person name="Porter J.L."/>
            <person name="Ryan J."/>
            <person name="Johnson P.D.R."/>
            <person name="Davies J.K."/>
            <person name="Jenkin G.A."/>
            <person name="Small P.L.C."/>
            <person name="Jones L.M."/>
            <person name="Tekaia F."/>
            <person name="Laval F."/>
            <person name="Daffe M."/>
            <person name="Parkhill J."/>
            <person name="Cole S.T."/>
        </authorList>
    </citation>
    <scope>NUCLEOTIDE SEQUENCE [LARGE SCALE GENOMIC DNA]</scope>
    <source>
        <strain>Agy99</strain>
    </source>
</reference>